<accession>B7NM92</accession>
<gene>
    <name evidence="1" type="primary">aat</name>
    <name type="ordered locus">ECIAI39_2265</name>
</gene>
<name>LFTR_ECO7I</name>
<keyword id="KW-0012">Acyltransferase</keyword>
<keyword id="KW-0963">Cytoplasm</keyword>
<keyword id="KW-0808">Transferase</keyword>
<protein>
    <recommendedName>
        <fullName evidence="1">Leucyl/phenylalanyl-tRNA--protein transferase</fullName>
        <ecNumber evidence="1">2.3.2.6</ecNumber>
    </recommendedName>
    <alternativeName>
        <fullName evidence="1">L/F-transferase</fullName>
    </alternativeName>
    <alternativeName>
        <fullName evidence="1">Leucyltransferase</fullName>
    </alternativeName>
    <alternativeName>
        <fullName evidence="1">Phenyalanyltransferase</fullName>
    </alternativeName>
</protein>
<comment type="function">
    <text evidence="1">Functions in the N-end rule pathway of protein degradation where it conjugates Leu, Phe and, less efficiently, Met from aminoacyl-tRNAs to the N-termini of proteins containing an N-terminal arginine or lysine.</text>
</comment>
<comment type="catalytic activity">
    <reaction evidence="1">
        <text>N-terminal L-lysyl-[protein] + L-leucyl-tRNA(Leu) = N-terminal L-leucyl-L-lysyl-[protein] + tRNA(Leu) + H(+)</text>
        <dbReference type="Rhea" id="RHEA:12340"/>
        <dbReference type="Rhea" id="RHEA-COMP:9613"/>
        <dbReference type="Rhea" id="RHEA-COMP:9622"/>
        <dbReference type="Rhea" id="RHEA-COMP:12670"/>
        <dbReference type="Rhea" id="RHEA-COMP:12671"/>
        <dbReference type="ChEBI" id="CHEBI:15378"/>
        <dbReference type="ChEBI" id="CHEBI:65249"/>
        <dbReference type="ChEBI" id="CHEBI:78442"/>
        <dbReference type="ChEBI" id="CHEBI:78494"/>
        <dbReference type="ChEBI" id="CHEBI:133043"/>
        <dbReference type="EC" id="2.3.2.6"/>
    </reaction>
</comment>
<comment type="catalytic activity">
    <reaction evidence="1">
        <text>N-terminal L-arginyl-[protein] + L-leucyl-tRNA(Leu) = N-terminal L-leucyl-L-arginyl-[protein] + tRNA(Leu) + H(+)</text>
        <dbReference type="Rhea" id="RHEA:50416"/>
        <dbReference type="Rhea" id="RHEA-COMP:9613"/>
        <dbReference type="Rhea" id="RHEA-COMP:9622"/>
        <dbReference type="Rhea" id="RHEA-COMP:12672"/>
        <dbReference type="Rhea" id="RHEA-COMP:12673"/>
        <dbReference type="ChEBI" id="CHEBI:15378"/>
        <dbReference type="ChEBI" id="CHEBI:64719"/>
        <dbReference type="ChEBI" id="CHEBI:78442"/>
        <dbReference type="ChEBI" id="CHEBI:78494"/>
        <dbReference type="ChEBI" id="CHEBI:133044"/>
        <dbReference type="EC" id="2.3.2.6"/>
    </reaction>
</comment>
<comment type="catalytic activity">
    <reaction evidence="1">
        <text>L-phenylalanyl-tRNA(Phe) + an N-terminal L-alpha-aminoacyl-[protein] = an N-terminal L-phenylalanyl-L-alpha-aminoacyl-[protein] + tRNA(Phe)</text>
        <dbReference type="Rhea" id="RHEA:43632"/>
        <dbReference type="Rhea" id="RHEA-COMP:9668"/>
        <dbReference type="Rhea" id="RHEA-COMP:9699"/>
        <dbReference type="Rhea" id="RHEA-COMP:10636"/>
        <dbReference type="Rhea" id="RHEA-COMP:10637"/>
        <dbReference type="ChEBI" id="CHEBI:78442"/>
        <dbReference type="ChEBI" id="CHEBI:78531"/>
        <dbReference type="ChEBI" id="CHEBI:78597"/>
        <dbReference type="ChEBI" id="CHEBI:83561"/>
        <dbReference type="EC" id="2.3.2.6"/>
    </reaction>
</comment>
<comment type="subcellular location">
    <subcellularLocation>
        <location evidence="1">Cytoplasm</location>
    </subcellularLocation>
</comment>
<comment type="similarity">
    <text evidence="1">Belongs to the L/F-transferase family.</text>
</comment>
<organism>
    <name type="scientific">Escherichia coli O7:K1 (strain IAI39 / ExPEC)</name>
    <dbReference type="NCBI Taxonomy" id="585057"/>
    <lineage>
        <taxon>Bacteria</taxon>
        <taxon>Pseudomonadati</taxon>
        <taxon>Pseudomonadota</taxon>
        <taxon>Gammaproteobacteria</taxon>
        <taxon>Enterobacterales</taxon>
        <taxon>Enterobacteriaceae</taxon>
        <taxon>Escherichia</taxon>
    </lineage>
</organism>
<dbReference type="EC" id="2.3.2.6" evidence="1"/>
<dbReference type="EMBL" id="CU928164">
    <property type="protein sequence ID" value="CAR18392.1"/>
    <property type="molecule type" value="Genomic_DNA"/>
</dbReference>
<dbReference type="RefSeq" id="WP_001241667.1">
    <property type="nucleotide sequence ID" value="NC_011750.1"/>
</dbReference>
<dbReference type="RefSeq" id="YP_002408228.1">
    <property type="nucleotide sequence ID" value="NC_011750.1"/>
</dbReference>
<dbReference type="SMR" id="B7NM92"/>
<dbReference type="STRING" id="585057.ECIAI39_2265"/>
<dbReference type="KEGG" id="ect:ECIAI39_2265"/>
<dbReference type="PATRIC" id="fig|585057.6.peg.2360"/>
<dbReference type="HOGENOM" id="CLU_075045_0_0_6"/>
<dbReference type="Proteomes" id="UP000000749">
    <property type="component" value="Chromosome"/>
</dbReference>
<dbReference type="GO" id="GO:0005737">
    <property type="term" value="C:cytoplasm"/>
    <property type="evidence" value="ECO:0007669"/>
    <property type="project" value="UniProtKB-SubCell"/>
</dbReference>
<dbReference type="GO" id="GO:0008914">
    <property type="term" value="F:leucyl-tRNA--protein transferase activity"/>
    <property type="evidence" value="ECO:0007669"/>
    <property type="project" value="UniProtKB-UniRule"/>
</dbReference>
<dbReference type="GO" id="GO:0030163">
    <property type="term" value="P:protein catabolic process"/>
    <property type="evidence" value="ECO:0007669"/>
    <property type="project" value="UniProtKB-UniRule"/>
</dbReference>
<dbReference type="FunFam" id="3.30.70.3550:FF:000001">
    <property type="entry name" value="Leucyl/phenylalanyl-tRNA--protein transferase"/>
    <property type="match status" value="1"/>
</dbReference>
<dbReference type="FunFam" id="3.40.630.70:FF:000001">
    <property type="entry name" value="Leucyl/phenylalanyl-tRNA--protein transferase"/>
    <property type="match status" value="1"/>
</dbReference>
<dbReference type="Gene3D" id="3.40.630.70">
    <property type="entry name" value="Leucyl/phenylalanyl-tRNA-protein transferase, C-terminal domain"/>
    <property type="match status" value="1"/>
</dbReference>
<dbReference type="Gene3D" id="3.30.70.3550">
    <property type="entry name" value="Leucyl/phenylalanyl-tRNA-protein transferase, N-terminal domain"/>
    <property type="match status" value="1"/>
</dbReference>
<dbReference type="HAMAP" id="MF_00688">
    <property type="entry name" value="Leu_Phe_trans"/>
    <property type="match status" value="1"/>
</dbReference>
<dbReference type="InterPro" id="IPR016181">
    <property type="entry name" value="Acyl_CoA_acyltransferase"/>
</dbReference>
<dbReference type="InterPro" id="IPR004616">
    <property type="entry name" value="Leu/Phe-tRNA_Trfase"/>
</dbReference>
<dbReference type="InterPro" id="IPR042203">
    <property type="entry name" value="Leu/Phe-tRNA_Trfase_C"/>
</dbReference>
<dbReference type="InterPro" id="IPR042221">
    <property type="entry name" value="Leu/Phe-tRNA_Trfase_N"/>
</dbReference>
<dbReference type="NCBIfam" id="TIGR00667">
    <property type="entry name" value="aat"/>
    <property type="match status" value="1"/>
</dbReference>
<dbReference type="PANTHER" id="PTHR30098">
    <property type="entry name" value="LEUCYL/PHENYLALANYL-TRNA--PROTEIN TRANSFERASE"/>
    <property type="match status" value="1"/>
</dbReference>
<dbReference type="PANTHER" id="PTHR30098:SF2">
    <property type="entry name" value="LEUCYL_PHENYLALANYL-TRNA--PROTEIN TRANSFERASE"/>
    <property type="match status" value="1"/>
</dbReference>
<dbReference type="Pfam" id="PF03588">
    <property type="entry name" value="Leu_Phe_trans"/>
    <property type="match status" value="1"/>
</dbReference>
<dbReference type="SUPFAM" id="SSF55729">
    <property type="entry name" value="Acyl-CoA N-acyltransferases (Nat)"/>
    <property type="match status" value="1"/>
</dbReference>
<reference key="1">
    <citation type="journal article" date="2009" name="PLoS Genet.">
        <title>Organised genome dynamics in the Escherichia coli species results in highly diverse adaptive paths.</title>
        <authorList>
            <person name="Touchon M."/>
            <person name="Hoede C."/>
            <person name="Tenaillon O."/>
            <person name="Barbe V."/>
            <person name="Baeriswyl S."/>
            <person name="Bidet P."/>
            <person name="Bingen E."/>
            <person name="Bonacorsi S."/>
            <person name="Bouchier C."/>
            <person name="Bouvet O."/>
            <person name="Calteau A."/>
            <person name="Chiapello H."/>
            <person name="Clermont O."/>
            <person name="Cruveiller S."/>
            <person name="Danchin A."/>
            <person name="Diard M."/>
            <person name="Dossat C."/>
            <person name="Karoui M.E."/>
            <person name="Frapy E."/>
            <person name="Garry L."/>
            <person name="Ghigo J.M."/>
            <person name="Gilles A.M."/>
            <person name="Johnson J."/>
            <person name="Le Bouguenec C."/>
            <person name="Lescat M."/>
            <person name="Mangenot S."/>
            <person name="Martinez-Jehanne V."/>
            <person name="Matic I."/>
            <person name="Nassif X."/>
            <person name="Oztas S."/>
            <person name="Petit M.A."/>
            <person name="Pichon C."/>
            <person name="Rouy Z."/>
            <person name="Ruf C.S."/>
            <person name="Schneider D."/>
            <person name="Tourret J."/>
            <person name="Vacherie B."/>
            <person name="Vallenet D."/>
            <person name="Medigue C."/>
            <person name="Rocha E.P.C."/>
            <person name="Denamur E."/>
        </authorList>
    </citation>
    <scope>NUCLEOTIDE SEQUENCE [LARGE SCALE GENOMIC DNA]</scope>
    <source>
        <strain>IAI39 / ExPEC</strain>
    </source>
</reference>
<proteinExistence type="inferred from homology"/>
<sequence>MRLVQLSRHSIAFPSPEGALREPNGLLALGGDLSPARLLMAYQRGIFPWFSPGDPILWWSPDPRAVLWPESLHISRSMKRFHKRSPYRVTMNYAFGQVIEGCASDREEGTWITRGVVEAYHRLHELGHAHSIEVWCEDELVGGMYGVAQGTLFCGESMFSRMENASKTALLVFCEEFIGHGGKLIDCQVLNDHTASLGACEIPRRDYLNYLNQMRLGRLPNNFWVPRCLFSPQE</sequence>
<evidence type="ECO:0000255" key="1">
    <source>
        <dbReference type="HAMAP-Rule" id="MF_00688"/>
    </source>
</evidence>
<feature type="chain" id="PRO_1000131920" description="Leucyl/phenylalanyl-tRNA--protein transferase">
    <location>
        <begin position="1"/>
        <end position="234"/>
    </location>
</feature>